<name>MEGL_TREDE</name>
<sequence>MNRKELEKLGFASKQIHAGSIKNKYGALATPIYQTSTFAFDSAEQGGRRFALEEEGYIYTRLGNPTTTVVEEKLACLENGEACMSASSGIGAVTSCIWSIVNAGDHIVAGKTLYGCTFAFLNHGLSRFGVDVTFVDTRDPENVKKALKPNTKIVYLETPANPNMYLCDIAAVSKIAHAHNPECKVIVDNTYMTPYLQRPLDLGADVVLHSATKYLNGHGDVIAGFVVGKKEFIDQVRFVGVKDMTGSTLGPFEAYLIGRGMKTLDIRMEKHCANAQKVAEFLEKHPAVESIAFPGLKSFPQYELAKKQMKLCGAMIAFTVKGGLEAGKTLINSVKFATIAVSLGDAETLIQHPASMTHSPYTPEERAASDIAEGLVRLSVGLEDAEDIIADLKQALDKLVK</sequence>
<reference key="1">
    <citation type="journal article" date="2004" name="Proc. Natl. Acad. Sci. U.S.A.">
        <title>Comparison of the genome of the oral pathogen Treponema denticola with other spirochete genomes.</title>
        <authorList>
            <person name="Seshadri R."/>
            <person name="Myers G.S.A."/>
            <person name="Tettelin H."/>
            <person name="Eisen J.A."/>
            <person name="Heidelberg J.F."/>
            <person name="Dodson R.J."/>
            <person name="Davidsen T.M."/>
            <person name="DeBoy R.T."/>
            <person name="Fouts D.E."/>
            <person name="Haft D.H."/>
            <person name="Selengut J."/>
            <person name="Ren Q."/>
            <person name="Brinkac L.M."/>
            <person name="Madupu R."/>
            <person name="Kolonay J.F."/>
            <person name="Durkin S.A."/>
            <person name="Daugherty S.C."/>
            <person name="Shetty J."/>
            <person name="Shvartsbeyn A."/>
            <person name="Gebregeorgis E."/>
            <person name="Geer K."/>
            <person name="Tsegaye G."/>
            <person name="Malek J.A."/>
            <person name="Ayodeji B."/>
            <person name="Shatsman S."/>
            <person name="McLeod M.P."/>
            <person name="Smajs D."/>
            <person name="Howell J.K."/>
            <person name="Pal S."/>
            <person name="Amin A."/>
            <person name="Vashisth P."/>
            <person name="McNeill T.Z."/>
            <person name="Xiang Q."/>
            <person name="Sodergren E."/>
            <person name="Baca E."/>
            <person name="Weinstock G.M."/>
            <person name="Norris S.J."/>
            <person name="Fraser C.M."/>
            <person name="Paulsen I.T."/>
        </authorList>
    </citation>
    <scope>NUCLEOTIDE SEQUENCE [LARGE SCALE GENOMIC DNA]</scope>
    <source>
        <strain>ATCC 35405 / DSM 14222 / CIP 103919 / JCM 8153 / KCTC 15104</strain>
    </source>
</reference>
<reference key="2">
    <citation type="journal article" date="2005" name="Biochem. Biophys. Res. Commun.">
        <title>High production of methyl mercaptan by L-methionine-alpha-deamino-gamma-mercaptomethane lyase from Treponema denticola.</title>
        <authorList>
            <person name="Fukamachi H."/>
            <person name="Nakano Y."/>
            <person name="Okano S."/>
            <person name="Shibata Y."/>
            <person name="Abiko Y."/>
            <person name="Yamashita Y."/>
        </authorList>
    </citation>
    <scope>IDENTIFICATION BY MASS SPECTROMETRY</scope>
    <scope>FUNCTION</scope>
    <scope>CATALYTIC ACTIVITY</scope>
    <scope>BIOPHYSICOCHEMICAL PROPERTIES</scope>
    <source>
        <strain>ATCC 35405 / DSM 14222 / CIP 103919 / JCM 8153 / KCTC 15104</strain>
    </source>
</reference>
<keyword id="KW-0456">Lyase</keyword>
<keyword id="KW-0663">Pyridoxal phosphate</keyword>
<keyword id="KW-1185">Reference proteome</keyword>
<feature type="chain" id="PRO_0000436015" description="L-methionine gamma-lyase">
    <location>
        <begin position="1"/>
        <end position="401"/>
    </location>
</feature>
<feature type="binding site" evidence="1">
    <location>
        <begin position="59"/>
        <end position="61"/>
    </location>
    <ligand>
        <name>pyridoxal 5'-phosphate</name>
        <dbReference type="ChEBI" id="CHEBI:597326"/>
        <note>ligand shared between dimeric partners</note>
    </ligand>
</feature>
<feature type="binding site" description="in other chain" evidence="1">
    <location>
        <begin position="89"/>
        <end position="90"/>
    </location>
    <ligand>
        <name>pyridoxal 5'-phosphate</name>
        <dbReference type="ChEBI" id="CHEBI:597326"/>
        <note>ligand shared between dimeric partners</note>
    </ligand>
</feature>
<feature type="binding site" evidence="1">
    <location>
        <position position="114"/>
    </location>
    <ligand>
        <name>substrate</name>
    </ligand>
</feature>
<feature type="binding site" description="in other chain" evidence="1">
    <location>
        <begin position="210"/>
        <end position="212"/>
    </location>
    <ligand>
        <name>pyridoxal 5'-phosphate</name>
        <dbReference type="ChEBI" id="CHEBI:597326"/>
        <note>ligand shared between dimeric partners</note>
    </ligand>
</feature>
<feature type="binding site" evidence="1">
    <location>
        <position position="377"/>
    </location>
    <ligand>
        <name>substrate</name>
    </ligand>
</feature>
<feature type="modified residue" description="N6-(pyridoxal phosphate)lysine" evidence="1">
    <location>
        <position position="213"/>
    </location>
</feature>
<evidence type="ECO:0000250" key="1">
    <source>
        <dbReference type="UniProtKB" id="P13254"/>
    </source>
</evidence>
<evidence type="ECO:0000269" key="2">
    <source>
    </source>
</evidence>
<evidence type="ECO:0000303" key="3">
    <source>
    </source>
</evidence>
<evidence type="ECO:0000305" key="4"/>
<evidence type="ECO:0000305" key="5">
    <source>
    </source>
</evidence>
<evidence type="ECO:0000312" key="6">
    <source>
        <dbReference type="EMBL" id="AAS12720.1"/>
    </source>
</evidence>
<dbReference type="EC" id="4.4.1.11" evidence="2"/>
<dbReference type="EC" id="4.4.1.2" evidence="2"/>
<dbReference type="EMBL" id="AE017226">
    <property type="protein sequence ID" value="AAS12720.1"/>
    <property type="molecule type" value="Genomic_DNA"/>
</dbReference>
<dbReference type="RefSeq" id="NP_972801.1">
    <property type="nucleotide sequence ID" value="NC_002967.9"/>
</dbReference>
<dbReference type="RefSeq" id="WP_002674490.1">
    <property type="nucleotide sequence ID" value="NC_002967.9"/>
</dbReference>
<dbReference type="SMR" id="Q73KL7"/>
<dbReference type="STRING" id="243275.TDE_2200"/>
<dbReference type="PaxDb" id="243275-TDE_2200"/>
<dbReference type="GeneID" id="2739476"/>
<dbReference type="KEGG" id="tde:TDE_2200"/>
<dbReference type="PATRIC" id="fig|243275.7.peg.2076"/>
<dbReference type="eggNOG" id="COG0626">
    <property type="taxonomic scope" value="Bacteria"/>
</dbReference>
<dbReference type="HOGENOM" id="CLU_018986_2_3_12"/>
<dbReference type="OrthoDB" id="9780685at2"/>
<dbReference type="BRENDA" id="4.4.1.11">
    <property type="organism ID" value="6426"/>
</dbReference>
<dbReference type="SABIO-RK" id="Q73KL7"/>
<dbReference type="Proteomes" id="UP000008212">
    <property type="component" value="Chromosome"/>
</dbReference>
<dbReference type="GO" id="GO:0005737">
    <property type="term" value="C:cytoplasm"/>
    <property type="evidence" value="ECO:0007669"/>
    <property type="project" value="TreeGrafter"/>
</dbReference>
<dbReference type="GO" id="GO:0047982">
    <property type="term" value="F:homocysteine desulfhydrase activity"/>
    <property type="evidence" value="ECO:0007669"/>
    <property type="project" value="UniProtKB-EC"/>
</dbReference>
<dbReference type="GO" id="GO:0018826">
    <property type="term" value="F:methionine gamma-lyase activity"/>
    <property type="evidence" value="ECO:0007669"/>
    <property type="project" value="UniProtKB-EC"/>
</dbReference>
<dbReference type="GO" id="GO:0030170">
    <property type="term" value="F:pyridoxal phosphate binding"/>
    <property type="evidence" value="ECO:0007669"/>
    <property type="project" value="InterPro"/>
</dbReference>
<dbReference type="GO" id="GO:0019346">
    <property type="term" value="P:transsulfuration"/>
    <property type="evidence" value="ECO:0007669"/>
    <property type="project" value="InterPro"/>
</dbReference>
<dbReference type="CDD" id="cd00614">
    <property type="entry name" value="CGS_like"/>
    <property type="match status" value="1"/>
</dbReference>
<dbReference type="FunFam" id="3.40.640.10:FF:000046">
    <property type="entry name" value="Cystathionine gamma-lyase"/>
    <property type="match status" value="1"/>
</dbReference>
<dbReference type="FunFam" id="3.90.1150.10:FF:000008">
    <property type="entry name" value="Cystathionine gamma-synthase"/>
    <property type="match status" value="1"/>
</dbReference>
<dbReference type="Gene3D" id="3.90.1150.10">
    <property type="entry name" value="Aspartate Aminotransferase, domain 1"/>
    <property type="match status" value="1"/>
</dbReference>
<dbReference type="Gene3D" id="3.40.640.10">
    <property type="entry name" value="Type I PLP-dependent aspartate aminotransferase-like (Major domain)"/>
    <property type="match status" value="1"/>
</dbReference>
<dbReference type="InterPro" id="IPR000277">
    <property type="entry name" value="Cys/Met-Metab_PyrdxlP-dep_enz"/>
</dbReference>
<dbReference type="InterPro" id="IPR054542">
    <property type="entry name" value="Cys_met_metab_PP"/>
</dbReference>
<dbReference type="InterPro" id="IPR006237">
    <property type="entry name" value="L-Met_gamma_lys"/>
</dbReference>
<dbReference type="InterPro" id="IPR015424">
    <property type="entry name" value="PyrdxlP-dep_Trfase"/>
</dbReference>
<dbReference type="InterPro" id="IPR015421">
    <property type="entry name" value="PyrdxlP-dep_Trfase_major"/>
</dbReference>
<dbReference type="InterPro" id="IPR015422">
    <property type="entry name" value="PyrdxlP-dep_Trfase_small"/>
</dbReference>
<dbReference type="NCBIfam" id="TIGR01328">
    <property type="entry name" value="met_gam_lyase"/>
    <property type="match status" value="1"/>
</dbReference>
<dbReference type="NCBIfam" id="NF004876">
    <property type="entry name" value="PRK06234.1"/>
    <property type="match status" value="1"/>
</dbReference>
<dbReference type="PANTHER" id="PTHR11808:SF80">
    <property type="entry name" value="CYSTATHIONINE GAMMA-LYASE"/>
    <property type="match status" value="1"/>
</dbReference>
<dbReference type="PANTHER" id="PTHR11808">
    <property type="entry name" value="TRANS-SULFURATION ENZYME FAMILY MEMBER"/>
    <property type="match status" value="1"/>
</dbReference>
<dbReference type="Pfam" id="PF01053">
    <property type="entry name" value="Cys_Met_Meta_PP"/>
    <property type="match status" value="1"/>
</dbReference>
<dbReference type="PIRSF" id="PIRSF001434">
    <property type="entry name" value="CGS"/>
    <property type="match status" value="1"/>
</dbReference>
<dbReference type="SUPFAM" id="SSF53383">
    <property type="entry name" value="PLP-dependent transferases"/>
    <property type="match status" value="1"/>
</dbReference>
<dbReference type="PROSITE" id="PS00868">
    <property type="entry name" value="CYS_MET_METAB_PP"/>
    <property type="match status" value="1"/>
</dbReference>
<proteinExistence type="evidence at protein level"/>
<gene>
    <name evidence="3 6" type="primary">megL</name>
    <name evidence="6" type="ordered locus">TDE_2200</name>
</gene>
<protein>
    <recommendedName>
        <fullName evidence="5">L-methionine gamma-lyase</fullName>
        <shortName evidence="4">MGL</shortName>
        <ecNumber evidence="2">4.4.1.11</ecNumber>
    </recommendedName>
    <alternativeName>
        <fullName evidence="5">Homocysteine desulfhydrase</fullName>
        <ecNumber evidence="2">4.4.1.2</ecNumber>
    </alternativeName>
    <alternativeName>
        <fullName evidence="3">L-methionine-alpha-deamino-gamma-mercaptomethane-lyase</fullName>
        <shortName evidence="3">METase</shortName>
    </alternativeName>
</protein>
<comment type="function">
    <text evidence="2">Catalyzes the alpha,gamma-elimination of L-methionine to produce methanethiol, 2-oxobutanoate and ammonia; methanethiol (methyl mercaptan) is considered to be one of the main causes of the oral malodor associated with periodontitis and may also play a role in the pathogenicity of T.denticola. Also displays homocysteine desulfhydrase activity, degrading homocysteine to produce hydrogen sulfide, 2-oxobutanoate and ammonia.</text>
</comment>
<comment type="catalytic activity">
    <reaction evidence="2">
        <text>L-methionine + H2O = methanethiol + 2-oxobutanoate + NH4(+)</text>
        <dbReference type="Rhea" id="RHEA:23800"/>
        <dbReference type="ChEBI" id="CHEBI:15377"/>
        <dbReference type="ChEBI" id="CHEBI:16007"/>
        <dbReference type="ChEBI" id="CHEBI:16763"/>
        <dbReference type="ChEBI" id="CHEBI:28938"/>
        <dbReference type="ChEBI" id="CHEBI:57844"/>
        <dbReference type="EC" id="4.4.1.11"/>
    </reaction>
</comment>
<comment type="catalytic activity">
    <reaction evidence="2">
        <text>L-homocysteine + H2O = 2-oxobutanoate + hydrogen sulfide + NH4(+) + H(+)</text>
        <dbReference type="Rhea" id="RHEA:14501"/>
        <dbReference type="ChEBI" id="CHEBI:15377"/>
        <dbReference type="ChEBI" id="CHEBI:15378"/>
        <dbReference type="ChEBI" id="CHEBI:16763"/>
        <dbReference type="ChEBI" id="CHEBI:28938"/>
        <dbReference type="ChEBI" id="CHEBI:29919"/>
        <dbReference type="ChEBI" id="CHEBI:58199"/>
        <dbReference type="EC" id="4.4.1.2"/>
    </reaction>
</comment>
<comment type="cofactor">
    <cofactor evidence="1 4">
        <name>pyridoxal 5'-phosphate</name>
        <dbReference type="ChEBI" id="CHEBI:597326"/>
    </cofactor>
</comment>
<comment type="biophysicochemical properties">
    <kinetics>
        <KM evidence="2">0.55 mM for L-methionine</KM>
        <Vmax evidence="2">36.6 umol/min/mg enzyme with L-methionine as substrate</Vmax>
    </kinetics>
</comment>
<comment type="subunit">
    <text evidence="1">Homotetramer; dimer of active dimers.</text>
</comment>
<comment type="similarity">
    <text evidence="4">Belongs to the trans-sulfuration enzymes family. L-methionine gamma-lyase subfamily.</text>
</comment>
<organism>
    <name type="scientific">Treponema denticola (strain ATCC 35405 / DSM 14222 / CIP 103919 / JCM 8153 / KCTC 15104)</name>
    <dbReference type="NCBI Taxonomy" id="243275"/>
    <lineage>
        <taxon>Bacteria</taxon>
        <taxon>Pseudomonadati</taxon>
        <taxon>Spirochaetota</taxon>
        <taxon>Spirochaetia</taxon>
        <taxon>Spirochaetales</taxon>
        <taxon>Treponemataceae</taxon>
        <taxon>Treponema</taxon>
    </lineage>
</organism>
<accession>Q73KL7</accession>